<gene>
    <name type="ordered locus">slr1411</name>
</gene>
<feature type="chain" id="PRO_0000146855" description="Putative nickel insertion protein">
    <location>
        <begin position="1"/>
        <end position="422"/>
    </location>
</feature>
<dbReference type="EMBL" id="BA000022">
    <property type="protein sequence ID" value="BAA16733.1"/>
    <property type="molecule type" value="Genomic_DNA"/>
</dbReference>
<dbReference type="PIR" id="S74581">
    <property type="entry name" value="S74581"/>
</dbReference>
<dbReference type="SMR" id="P72725"/>
<dbReference type="STRING" id="1148.gene:10497588"/>
<dbReference type="PaxDb" id="1148-1651806"/>
<dbReference type="EnsemblBacteria" id="BAA16733">
    <property type="protein sequence ID" value="BAA16733"/>
    <property type="gene ID" value="BAA16733"/>
</dbReference>
<dbReference type="KEGG" id="syn:slr1411"/>
<dbReference type="eggNOG" id="COG1641">
    <property type="taxonomic scope" value="Bacteria"/>
</dbReference>
<dbReference type="InParanoid" id="P72725"/>
<dbReference type="PhylomeDB" id="P72725"/>
<dbReference type="Proteomes" id="UP000001425">
    <property type="component" value="Chromosome"/>
</dbReference>
<dbReference type="GO" id="GO:0016829">
    <property type="term" value="F:lyase activity"/>
    <property type="evidence" value="ECO:0007669"/>
    <property type="project" value="UniProtKB-UniRule"/>
</dbReference>
<dbReference type="GO" id="GO:0016151">
    <property type="term" value="F:nickel cation binding"/>
    <property type="evidence" value="ECO:0007669"/>
    <property type="project" value="UniProtKB-UniRule"/>
</dbReference>
<dbReference type="Gene3D" id="3.30.70.1380">
    <property type="entry name" value="Transcriptional regulatory protein pf0864 domain like"/>
    <property type="match status" value="1"/>
</dbReference>
<dbReference type="HAMAP" id="MF_01074">
    <property type="entry name" value="LarC"/>
    <property type="match status" value="1"/>
</dbReference>
<dbReference type="InterPro" id="IPR002822">
    <property type="entry name" value="Ni_insertion"/>
</dbReference>
<dbReference type="NCBIfam" id="TIGR00299">
    <property type="entry name" value="nickel pincer cofactor biosynthesis protein LarC"/>
    <property type="match status" value="1"/>
</dbReference>
<dbReference type="PANTHER" id="PTHR36566">
    <property type="entry name" value="NICKEL INSERTION PROTEIN-RELATED"/>
    <property type="match status" value="1"/>
</dbReference>
<dbReference type="PANTHER" id="PTHR36566:SF1">
    <property type="entry name" value="PYRIDINIUM-3,5-BISTHIOCARBOXYLIC ACID MONONUCLEOTIDE NICKEL INSERTION PROTEIN"/>
    <property type="match status" value="1"/>
</dbReference>
<dbReference type="Pfam" id="PF01969">
    <property type="entry name" value="Ni_insertion"/>
    <property type="match status" value="1"/>
</dbReference>
<reference key="1">
    <citation type="journal article" date="1996" name="DNA Res.">
        <title>Sequence analysis of the genome of the unicellular cyanobacterium Synechocystis sp. strain PCC6803. II. Sequence determination of the entire genome and assignment of potential protein-coding regions.</title>
        <authorList>
            <person name="Kaneko T."/>
            <person name="Sato S."/>
            <person name="Kotani H."/>
            <person name="Tanaka A."/>
            <person name="Asamizu E."/>
            <person name="Nakamura Y."/>
            <person name="Miyajima N."/>
            <person name="Hirosawa M."/>
            <person name="Sugiura M."/>
            <person name="Sasamoto S."/>
            <person name="Kimura T."/>
            <person name="Hosouchi T."/>
            <person name="Matsuno A."/>
            <person name="Muraki A."/>
            <person name="Nakazaki N."/>
            <person name="Naruo K."/>
            <person name="Okumura S."/>
            <person name="Shimpo S."/>
            <person name="Takeuchi C."/>
            <person name="Wada T."/>
            <person name="Watanabe A."/>
            <person name="Yamada M."/>
            <person name="Yasuda M."/>
            <person name="Tabata S."/>
        </authorList>
    </citation>
    <scope>NUCLEOTIDE SEQUENCE [LARGE SCALE GENOMIC DNA]</scope>
    <source>
        <strain>ATCC 27184 / PCC 6803 / Kazusa</strain>
    </source>
</reference>
<evidence type="ECO:0000255" key="1">
    <source>
        <dbReference type="HAMAP-Rule" id="MF_01074"/>
    </source>
</evidence>
<sequence>MGLIAYFDCPTGISGDMCLGALVSAGVPLEYLMEKLAPLGLTDEYRLTAGLVQKQGQAATKVEVKLLNDHHSHGPGHHGMRHLPEIEQLIKQANLPARVSRWSLAIFHQLAIAEGEVHGIEPEAVHFHEVGATDAIVDIVGTCLGLDYLGIDQCYWSALPTGSGTVRAAHGDLPVPVPAVLKLWQTRQVPVYDNGLTGELVTPTGAAIAVTLASQFGPKPPLNLHKVGLGAGSKDFPLANILRLWIGTEITPHNHPLSSEAPFGQLETITVLETQLDDIQPQAVGYLLESLLHQGAIDVFTQAIAMKKSRPGILLTVLCAPENQNHCLNLLFRETTSLGVRVRQQQRYALEREWQTVVIPHGPIRIKVAYGYQAGKKIILNAHPEFADCAALAKATGQPWQLIHQQAIGAWSNLNKELSPES</sequence>
<comment type="similarity">
    <text evidence="1">Belongs to the LarC family.</text>
</comment>
<proteinExistence type="inferred from homology"/>
<accession>P72725</accession>
<organism>
    <name type="scientific">Synechocystis sp. (strain ATCC 27184 / PCC 6803 / Kazusa)</name>
    <dbReference type="NCBI Taxonomy" id="1111708"/>
    <lineage>
        <taxon>Bacteria</taxon>
        <taxon>Bacillati</taxon>
        <taxon>Cyanobacteriota</taxon>
        <taxon>Cyanophyceae</taxon>
        <taxon>Synechococcales</taxon>
        <taxon>Merismopediaceae</taxon>
        <taxon>Synechocystis</taxon>
    </lineage>
</organism>
<protein>
    <recommendedName>
        <fullName evidence="1">Putative nickel insertion protein</fullName>
    </recommendedName>
</protein>
<name>Y1411_SYNY3</name>
<keyword id="KW-0533">Nickel</keyword>
<keyword id="KW-1185">Reference proteome</keyword>